<protein>
    <recommendedName>
        <fullName evidence="1">Large ribosomal subunit protein bL32</fullName>
    </recommendedName>
    <alternativeName>
        <fullName evidence="3">50S ribosomal protein L32</fullName>
    </alternativeName>
</protein>
<evidence type="ECO:0000255" key="1">
    <source>
        <dbReference type="HAMAP-Rule" id="MF_00340"/>
    </source>
</evidence>
<evidence type="ECO:0000256" key="2">
    <source>
        <dbReference type="SAM" id="MobiDB-lite"/>
    </source>
</evidence>
<evidence type="ECO:0000305" key="3"/>
<sequence length="60" mass="6794">MAKHPVPKKKTSKSKRDMRRSHHALTVPAMNDCPQCHGKKLSHHICPNCGYYDGRQVLAV</sequence>
<organism>
    <name type="scientific">Deinococcus deserti (strain DSM 17065 / CIP 109153 / LMG 22923 / VCD115)</name>
    <dbReference type="NCBI Taxonomy" id="546414"/>
    <lineage>
        <taxon>Bacteria</taxon>
        <taxon>Thermotogati</taxon>
        <taxon>Deinococcota</taxon>
        <taxon>Deinococci</taxon>
        <taxon>Deinococcales</taxon>
        <taxon>Deinococcaceae</taxon>
        <taxon>Deinococcus</taxon>
    </lineage>
</organism>
<proteinExistence type="inferred from homology"/>
<name>RL32_DEIDV</name>
<feature type="chain" id="PRO_1000205257" description="Large ribosomal subunit protein bL32">
    <location>
        <begin position="1"/>
        <end position="60"/>
    </location>
</feature>
<feature type="region of interest" description="Disordered" evidence="2">
    <location>
        <begin position="1"/>
        <end position="26"/>
    </location>
</feature>
<feature type="compositionally biased region" description="Basic residues" evidence="2">
    <location>
        <begin position="1"/>
        <end position="23"/>
    </location>
</feature>
<accession>C1CYB8</accession>
<comment type="similarity">
    <text evidence="1">Belongs to the bacterial ribosomal protein bL32 family.</text>
</comment>
<reference key="1">
    <citation type="journal article" date="2009" name="PLoS Genet.">
        <title>Alliance of proteomics and genomics to unravel the specificities of Sahara bacterium Deinococcus deserti.</title>
        <authorList>
            <person name="de Groot A."/>
            <person name="Dulermo R."/>
            <person name="Ortet P."/>
            <person name="Blanchard L."/>
            <person name="Guerin P."/>
            <person name="Fernandez B."/>
            <person name="Vacherie B."/>
            <person name="Dossat C."/>
            <person name="Jolivet E."/>
            <person name="Siguier P."/>
            <person name="Chandler M."/>
            <person name="Barakat M."/>
            <person name="Dedieu A."/>
            <person name="Barbe V."/>
            <person name="Heulin T."/>
            <person name="Sommer S."/>
            <person name="Achouak W."/>
            <person name="Armengaud J."/>
        </authorList>
    </citation>
    <scope>NUCLEOTIDE SEQUENCE [LARGE SCALE GENOMIC DNA]</scope>
    <source>
        <strain>DSM 17065 / CIP 109153 / LMG 22923 / VCD115</strain>
    </source>
</reference>
<keyword id="KW-1185">Reference proteome</keyword>
<keyword id="KW-0687">Ribonucleoprotein</keyword>
<keyword id="KW-0689">Ribosomal protein</keyword>
<dbReference type="EMBL" id="CP001114">
    <property type="protein sequence ID" value="ACO44939.1"/>
    <property type="molecule type" value="Genomic_DNA"/>
</dbReference>
<dbReference type="RefSeq" id="WP_012692062.1">
    <property type="nucleotide sequence ID" value="NC_012526.1"/>
</dbReference>
<dbReference type="SMR" id="C1CYB8"/>
<dbReference type="STRING" id="546414.Deide_01330"/>
<dbReference type="PaxDb" id="546414-Deide_01330"/>
<dbReference type="KEGG" id="ddr:Deide_01330"/>
<dbReference type="eggNOG" id="COG0333">
    <property type="taxonomic scope" value="Bacteria"/>
</dbReference>
<dbReference type="HOGENOM" id="CLU_129084_1_3_0"/>
<dbReference type="OrthoDB" id="9812874at2"/>
<dbReference type="Proteomes" id="UP000002208">
    <property type="component" value="Chromosome"/>
</dbReference>
<dbReference type="GO" id="GO:0015934">
    <property type="term" value="C:large ribosomal subunit"/>
    <property type="evidence" value="ECO:0007669"/>
    <property type="project" value="InterPro"/>
</dbReference>
<dbReference type="GO" id="GO:0003735">
    <property type="term" value="F:structural constituent of ribosome"/>
    <property type="evidence" value="ECO:0007669"/>
    <property type="project" value="InterPro"/>
</dbReference>
<dbReference type="GO" id="GO:0006412">
    <property type="term" value="P:translation"/>
    <property type="evidence" value="ECO:0007669"/>
    <property type="project" value="UniProtKB-UniRule"/>
</dbReference>
<dbReference type="Gene3D" id="1.20.5.640">
    <property type="entry name" value="Single helix bin"/>
    <property type="match status" value="1"/>
</dbReference>
<dbReference type="HAMAP" id="MF_00340">
    <property type="entry name" value="Ribosomal_bL32"/>
    <property type="match status" value="1"/>
</dbReference>
<dbReference type="InterPro" id="IPR002677">
    <property type="entry name" value="Ribosomal_bL32"/>
</dbReference>
<dbReference type="InterPro" id="IPR044957">
    <property type="entry name" value="Ribosomal_bL32_bact"/>
</dbReference>
<dbReference type="InterPro" id="IPR011332">
    <property type="entry name" value="Ribosomal_zn-bd"/>
</dbReference>
<dbReference type="NCBIfam" id="TIGR01031">
    <property type="entry name" value="rpmF_bact"/>
    <property type="match status" value="1"/>
</dbReference>
<dbReference type="PANTHER" id="PTHR35534">
    <property type="entry name" value="50S RIBOSOMAL PROTEIN L32"/>
    <property type="match status" value="1"/>
</dbReference>
<dbReference type="PANTHER" id="PTHR35534:SF1">
    <property type="entry name" value="LARGE RIBOSOMAL SUBUNIT PROTEIN BL32"/>
    <property type="match status" value="1"/>
</dbReference>
<dbReference type="Pfam" id="PF01783">
    <property type="entry name" value="Ribosomal_L32p"/>
    <property type="match status" value="1"/>
</dbReference>
<dbReference type="SUPFAM" id="SSF57829">
    <property type="entry name" value="Zn-binding ribosomal proteins"/>
    <property type="match status" value="1"/>
</dbReference>
<gene>
    <name evidence="1" type="primary">rpmF</name>
    <name type="ordered locus">Deide_01330</name>
</gene>